<keyword id="KW-1003">Cell membrane</keyword>
<keyword id="KW-0204">Cytolysis</keyword>
<keyword id="KW-0472">Membrane</keyword>
<keyword id="KW-0812">Transmembrane</keyword>
<keyword id="KW-1133">Transmembrane helix</keyword>
<reference key="1">
    <citation type="journal article" date="2007" name="BMC Microbiol.">
        <title>Subtle genetic changes enhance virulence of methicillin resistant and sensitive Staphylococcus aureus.</title>
        <authorList>
            <person name="Highlander S.K."/>
            <person name="Hulten K.G."/>
            <person name="Qin X."/>
            <person name="Jiang H."/>
            <person name="Yerrapragada S."/>
            <person name="Mason E.O. Jr."/>
            <person name="Shang Y."/>
            <person name="Williams T.M."/>
            <person name="Fortunov R.M."/>
            <person name="Liu Y."/>
            <person name="Igboeli O."/>
            <person name="Petrosino J."/>
            <person name="Tirumalai M."/>
            <person name="Uzman A."/>
            <person name="Fox G.E."/>
            <person name="Cardenas A.M."/>
            <person name="Muzny D.M."/>
            <person name="Hemphill L."/>
            <person name="Ding Y."/>
            <person name="Dugan S."/>
            <person name="Blyth P.R."/>
            <person name="Buhay C.J."/>
            <person name="Dinh H.H."/>
            <person name="Hawes A.C."/>
            <person name="Holder M."/>
            <person name="Kovar C.L."/>
            <person name="Lee S.L."/>
            <person name="Liu W."/>
            <person name="Nazareth L.V."/>
            <person name="Wang Q."/>
            <person name="Zhou J."/>
            <person name="Kaplan S.L."/>
            <person name="Weinstock G.M."/>
        </authorList>
    </citation>
    <scope>NUCLEOTIDE SEQUENCE [LARGE SCALE GENOMIC DNA]</scope>
    <source>
        <strain>USA300 / TCH1516</strain>
    </source>
</reference>
<accession>A8Z0M5</accession>
<evidence type="ECO:0000255" key="1">
    <source>
        <dbReference type="HAMAP-Rule" id="MF_01141"/>
    </source>
</evidence>
<organism>
    <name type="scientific">Staphylococcus aureus (strain USA300 / TCH1516)</name>
    <dbReference type="NCBI Taxonomy" id="451516"/>
    <lineage>
        <taxon>Bacteria</taxon>
        <taxon>Bacillati</taxon>
        <taxon>Bacillota</taxon>
        <taxon>Bacilli</taxon>
        <taxon>Bacillales</taxon>
        <taxon>Staphylococcaceae</taxon>
        <taxon>Staphylococcus</taxon>
    </lineage>
</organism>
<dbReference type="EMBL" id="CP000730">
    <property type="protein sequence ID" value="ABX28304.1"/>
    <property type="molecule type" value="Genomic_DNA"/>
</dbReference>
<dbReference type="RefSeq" id="WP_001792906.1">
    <property type="nucleotide sequence ID" value="NC_010079.1"/>
</dbReference>
<dbReference type="SMR" id="A8Z0M5"/>
<dbReference type="KEGG" id="sax:USA300HOU_0273"/>
<dbReference type="HOGENOM" id="CLU_113736_0_1_9"/>
<dbReference type="GO" id="GO:0005886">
    <property type="term" value="C:plasma membrane"/>
    <property type="evidence" value="ECO:0007669"/>
    <property type="project" value="UniProtKB-SubCell"/>
</dbReference>
<dbReference type="GO" id="GO:0019835">
    <property type="term" value="P:cytolysis"/>
    <property type="evidence" value="ECO:0007669"/>
    <property type="project" value="UniProtKB-UniRule"/>
</dbReference>
<dbReference type="GO" id="GO:0031640">
    <property type="term" value="P:killing of cells of another organism"/>
    <property type="evidence" value="ECO:0007669"/>
    <property type="project" value="UniProtKB-KW"/>
</dbReference>
<dbReference type="GO" id="GO:0012501">
    <property type="term" value="P:programmed cell death"/>
    <property type="evidence" value="ECO:0007669"/>
    <property type="project" value="UniProtKB-UniRule"/>
</dbReference>
<dbReference type="HAMAP" id="MF_01141">
    <property type="entry name" value="LrgA"/>
    <property type="match status" value="1"/>
</dbReference>
<dbReference type="InterPro" id="IPR023736">
    <property type="entry name" value="Antiholin-like_LrgA"/>
</dbReference>
<dbReference type="InterPro" id="IPR005538">
    <property type="entry name" value="LrgA/CidA"/>
</dbReference>
<dbReference type="NCBIfam" id="NF003155">
    <property type="entry name" value="PRK04125.1"/>
    <property type="match status" value="1"/>
</dbReference>
<dbReference type="PANTHER" id="PTHR33931:SF4">
    <property type="entry name" value="ANTIHOLIN-LIKE PROTEIN LRGA"/>
    <property type="match status" value="1"/>
</dbReference>
<dbReference type="PANTHER" id="PTHR33931">
    <property type="entry name" value="HOLIN-LIKE PROTEIN CIDA-RELATED"/>
    <property type="match status" value="1"/>
</dbReference>
<dbReference type="Pfam" id="PF03788">
    <property type="entry name" value="LrgA"/>
    <property type="match status" value="1"/>
</dbReference>
<proteinExistence type="inferred from homology"/>
<sequence length="147" mass="15780">MVVKQQKDASKPAHFFHQVIVIALVLFVSKIIESFMPIPMPASVIGLVLLFVLLCTGAVKLGEVEKVGTTLTNNIGLLFVPAGISVVNSLGVISQAPFLIIGLIIVSTILLLICTGYVTQIIMKVTSRSKGDKVTKKIKIEEAQAHD</sequence>
<name>LRGA_STAAT</name>
<comment type="function">
    <text evidence="1">Inhibits the expression or activity of extracellular murein hydrolases by interacting, possibly with LrgB, with the holin-like proteins CidA and/or CidB. The LrgAB and CidAB proteins may affect the proton motive force of the membrane. May be involved in programmed cell death (PCD), possibly triggering PCD in response to antibiotics and environmental stresses.</text>
</comment>
<comment type="subcellular location">
    <subcellularLocation>
        <location evidence="1">Cell membrane</location>
        <topology evidence="1">Multi-pass membrane protein</topology>
    </subcellularLocation>
</comment>
<comment type="similarity">
    <text evidence="1">Belongs to the CidA/LrgA family. LrgA subfamily.</text>
</comment>
<protein>
    <recommendedName>
        <fullName evidence="1">Antiholin-like protein LrgA</fullName>
    </recommendedName>
</protein>
<gene>
    <name evidence="1" type="primary">lrgA</name>
    <name type="ordered locus">USA300HOU_0273</name>
</gene>
<feature type="chain" id="PRO_1000085031" description="Antiholin-like protein LrgA">
    <location>
        <begin position="1"/>
        <end position="147"/>
    </location>
</feature>
<feature type="transmembrane region" description="Helical" evidence="1">
    <location>
        <begin position="12"/>
        <end position="32"/>
    </location>
</feature>
<feature type="transmembrane region" description="Helical" evidence="1">
    <location>
        <begin position="35"/>
        <end position="55"/>
    </location>
</feature>
<feature type="transmembrane region" description="Helical" evidence="1">
    <location>
        <begin position="74"/>
        <end position="94"/>
    </location>
</feature>
<feature type="transmembrane region" description="Helical" evidence="1">
    <location>
        <begin position="98"/>
        <end position="118"/>
    </location>
</feature>